<sequence length="65" mass="7289">MPKIKTVRGAAKRFKKTGKGGFKHKHANLRHILTKKATKRKRHLRPKAMVSKGDLGLVIACLPYA</sequence>
<feature type="chain" id="PRO_1000081624" description="Large ribosomal subunit protein bL35">
    <location>
        <begin position="1"/>
        <end position="65"/>
    </location>
</feature>
<feature type="region of interest" description="Disordered" evidence="2">
    <location>
        <begin position="1"/>
        <end position="22"/>
    </location>
</feature>
<feature type="compositionally biased region" description="Basic residues" evidence="2">
    <location>
        <begin position="10"/>
        <end position="22"/>
    </location>
</feature>
<protein>
    <recommendedName>
        <fullName evidence="1">Large ribosomal subunit protein bL35</fullName>
    </recommendedName>
    <alternativeName>
        <fullName evidence="3">50S ribosomal protein L35</fullName>
    </alternativeName>
</protein>
<dbReference type="EMBL" id="CP000886">
    <property type="protein sequence ID" value="ABX67390.1"/>
    <property type="molecule type" value="Genomic_DNA"/>
</dbReference>
<dbReference type="RefSeq" id="WP_001124225.1">
    <property type="nucleotide sequence ID" value="NC_010102.1"/>
</dbReference>
<dbReference type="SMR" id="A9N241"/>
<dbReference type="GeneID" id="97601348"/>
<dbReference type="KEGG" id="spq:SPAB_02003"/>
<dbReference type="PATRIC" id="fig|1016998.12.peg.1891"/>
<dbReference type="HOGENOM" id="CLU_169643_1_1_6"/>
<dbReference type="BioCyc" id="SENT1016998:SPAB_RS08170-MONOMER"/>
<dbReference type="Proteomes" id="UP000008556">
    <property type="component" value="Chromosome"/>
</dbReference>
<dbReference type="GO" id="GO:0022625">
    <property type="term" value="C:cytosolic large ribosomal subunit"/>
    <property type="evidence" value="ECO:0007669"/>
    <property type="project" value="TreeGrafter"/>
</dbReference>
<dbReference type="GO" id="GO:0003735">
    <property type="term" value="F:structural constituent of ribosome"/>
    <property type="evidence" value="ECO:0007669"/>
    <property type="project" value="InterPro"/>
</dbReference>
<dbReference type="GO" id="GO:0006412">
    <property type="term" value="P:translation"/>
    <property type="evidence" value="ECO:0007669"/>
    <property type="project" value="UniProtKB-UniRule"/>
</dbReference>
<dbReference type="FunFam" id="4.10.410.60:FF:000001">
    <property type="entry name" value="50S ribosomal protein L35"/>
    <property type="match status" value="1"/>
</dbReference>
<dbReference type="Gene3D" id="4.10.410.60">
    <property type="match status" value="1"/>
</dbReference>
<dbReference type="HAMAP" id="MF_00514">
    <property type="entry name" value="Ribosomal_bL35"/>
    <property type="match status" value="1"/>
</dbReference>
<dbReference type="InterPro" id="IPR001706">
    <property type="entry name" value="Ribosomal_bL35"/>
</dbReference>
<dbReference type="InterPro" id="IPR021137">
    <property type="entry name" value="Ribosomal_bL35-like"/>
</dbReference>
<dbReference type="InterPro" id="IPR018265">
    <property type="entry name" value="Ribosomal_bL35_CS"/>
</dbReference>
<dbReference type="InterPro" id="IPR037229">
    <property type="entry name" value="Ribosomal_bL35_sf"/>
</dbReference>
<dbReference type="NCBIfam" id="TIGR00001">
    <property type="entry name" value="rpmI_bact"/>
    <property type="match status" value="1"/>
</dbReference>
<dbReference type="PANTHER" id="PTHR33343">
    <property type="entry name" value="54S RIBOSOMAL PROTEIN BL35M"/>
    <property type="match status" value="1"/>
</dbReference>
<dbReference type="PANTHER" id="PTHR33343:SF1">
    <property type="entry name" value="LARGE RIBOSOMAL SUBUNIT PROTEIN BL35M"/>
    <property type="match status" value="1"/>
</dbReference>
<dbReference type="Pfam" id="PF01632">
    <property type="entry name" value="Ribosomal_L35p"/>
    <property type="match status" value="1"/>
</dbReference>
<dbReference type="PRINTS" id="PR00064">
    <property type="entry name" value="RIBOSOMALL35"/>
</dbReference>
<dbReference type="SUPFAM" id="SSF143034">
    <property type="entry name" value="L35p-like"/>
    <property type="match status" value="1"/>
</dbReference>
<dbReference type="PROSITE" id="PS00936">
    <property type="entry name" value="RIBOSOMAL_L35"/>
    <property type="match status" value="1"/>
</dbReference>
<keyword id="KW-0687">Ribonucleoprotein</keyword>
<keyword id="KW-0689">Ribosomal protein</keyword>
<accession>A9N241</accession>
<comment type="similarity">
    <text evidence="1">Belongs to the bacterial ribosomal protein bL35 family.</text>
</comment>
<name>RL35_SALPB</name>
<gene>
    <name evidence="1" type="primary">rpmI</name>
    <name type="ordered locus">SPAB_02003</name>
</gene>
<organism>
    <name type="scientific">Salmonella paratyphi B (strain ATCC BAA-1250 / SPB7)</name>
    <dbReference type="NCBI Taxonomy" id="1016998"/>
    <lineage>
        <taxon>Bacteria</taxon>
        <taxon>Pseudomonadati</taxon>
        <taxon>Pseudomonadota</taxon>
        <taxon>Gammaproteobacteria</taxon>
        <taxon>Enterobacterales</taxon>
        <taxon>Enterobacteriaceae</taxon>
        <taxon>Salmonella</taxon>
    </lineage>
</organism>
<proteinExistence type="inferred from homology"/>
<evidence type="ECO:0000255" key="1">
    <source>
        <dbReference type="HAMAP-Rule" id="MF_00514"/>
    </source>
</evidence>
<evidence type="ECO:0000256" key="2">
    <source>
        <dbReference type="SAM" id="MobiDB-lite"/>
    </source>
</evidence>
<evidence type="ECO:0000305" key="3"/>
<reference key="1">
    <citation type="submission" date="2007-11" db="EMBL/GenBank/DDBJ databases">
        <authorList>
            <consortium name="The Salmonella enterica serovar Paratyphi B Genome Sequencing Project"/>
            <person name="McClelland M."/>
            <person name="Sanderson E.K."/>
            <person name="Porwollik S."/>
            <person name="Spieth J."/>
            <person name="Clifton W.S."/>
            <person name="Fulton R."/>
            <person name="Cordes M."/>
            <person name="Wollam A."/>
            <person name="Shah N."/>
            <person name="Pepin K."/>
            <person name="Bhonagiri V."/>
            <person name="Nash W."/>
            <person name="Johnson M."/>
            <person name="Thiruvilangam P."/>
            <person name="Wilson R."/>
        </authorList>
    </citation>
    <scope>NUCLEOTIDE SEQUENCE [LARGE SCALE GENOMIC DNA]</scope>
    <source>
        <strain>ATCC BAA-1250 / SPB7</strain>
    </source>
</reference>